<evidence type="ECO:0000255" key="1">
    <source>
        <dbReference type="HAMAP-Rule" id="MF_00104"/>
    </source>
</evidence>
<sequence>MKNLLDLEHKLNYYFNDRNLLKNALLHKSLGNERKEYKNQTNERLELLGDAVLDLIVAEYLYKSYKNASEGPIAKLKAMIVSEPILAKISRQIGVGKFLMLSRGEVMSGGRNRESILADSFEAILGAVYIDSNLDEARVFALSHIKQYIDHIEENEDILDFKSILQEYVQKEFKTVPTYELVAERGPDHMKEFEIQVIVGNYKEKAVARNKKKAEQLSAKALCIKLGVKYNEAL</sequence>
<gene>
    <name evidence="1" type="primary">rnc</name>
    <name type="ordered locus">FN0152</name>
</gene>
<protein>
    <recommendedName>
        <fullName evidence="1">Ribonuclease 3</fullName>
        <ecNumber evidence="1">3.1.26.3</ecNumber>
    </recommendedName>
    <alternativeName>
        <fullName evidence="1">Ribonuclease III</fullName>
        <shortName evidence="1">RNase III</shortName>
    </alternativeName>
</protein>
<organism>
    <name type="scientific">Fusobacterium nucleatum subsp. nucleatum (strain ATCC 25586 / DSM 15643 / BCRC 10681 / CIP 101130 / JCM 8532 / KCTC 2640 / LMG 13131 / VPI 4355)</name>
    <dbReference type="NCBI Taxonomy" id="190304"/>
    <lineage>
        <taxon>Bacteria</taxon>
        <taxon>Fusobacteriati</taxon>
        <taxon>Fusobacteriota</taxon>
        <taxon>Fusobacteriia</taxon>
        <taxon>Fusobacteriales</taxon>
        <taxon>Fusobacteriaceae</taxon>
        <taxon>Fusobacterium</taxon>
    </lineage>
</organism>
<accession>Q8RGX3</accession>
<keyword id="KW-0963">Cytoplasm</keyword>
<keyword id="KW-0255">Endonuclease</keyword>
<keyword id="KW-0378">Hydrolase</keyword>
<keyword id="KW-0460">Magnesium</keyword>
<keyword id="KW-0479">Metal-binding</keyword>
<keyword id="KW-0507">mRNA processing</keyword>
<keyword id="KW-0540">Nuclease</keyword>
<keyword id="KW-1185">Reference proteome</keyword>
<keyword id="KW-0694">RNA-binding</keyword>
<keyword id="KW-0698">rRNA processing</keyword>
<keyword id="KW-0699">rRNA-binding</keyword>
<keyword id="KW-0819">tRNA processing</keyword>
<comment type="function">
    <text evidence="1">Digests double-stranded RNA. Involved in the processing of primary rRNA transcript to yield the immediate precursors to the large and small rRNAs (23S and 16S). Processes some mRNAs, and tRNAs when they are encoded in the rRNA operon. Processes pre-crRNA and tracrRNA of type II CRISPR loci if present in the organism.</text>
</comment>
<comment type="catalytic activity">
    <reaction evidence="1">
        <text>Endonucleolytic cleavage to 5'-phosphomonoester.</text>
        <dbReference type="EC" id="3.1.26.3"/>
    </reaction>
</comment>
<comment type="cofactor">
    <cofactor evidence="1">
        <name>Mg(2+)</name>
        <dbReference type="ChEBI" id="CHEBI:18420"/>
    </cofactor>
</comment>
<comment type="subunit">
    <text evidence="1">Homodimer.</text>
</comment>
<comment type="subcellular location">
    <subcellularLocation>
        <location evidence="1">Cytoplasm</location>
    </subcellularLocation>
</comment>
<comment type="similarity">
    <text evidence="1">Belongs to the ribonuclease III family.</text>
</comment>
<name>RNC_FUSNN</name>
<reference key="1">
    <citation type="journal article" date="2002" name="J. Bacteriol.">
        <title>Genome sequence and analysis of the oral bacterium Fusobacterium nucleatum strain ATCC 25586.</title>
        <authorList>
            <person name="Kapatral V."/>
            <person name="Anderson I."/>
            <person name="Ivanova N."/>
            <person name="Reznik G."/>
            <person name="Los T."/>
            <person name="Lykidis A."/>
            <person name="Bhattacharyya A."/>
            <person name="Bartman A."/>
            <person name="Gardner W."/>
            <person name="Grechkin G."/>
            <person name="Zhu L."/>
            <person name="Vasieva O."/>
            <person name="Chu L."/>
            <person name="Kogan Y."/>
            <person name="Chaga O."/>
            <person name="Goltsman E."/>
            <person name="Bernal A."/>
            <person name="Larsen N."/>
            <person name="D'Souza M."/>
            <person name="Walunas T."/>
            <person name="Pusch G."/>
            <person name="Haselkorn R."/>
            <person name="Fonstein M."/>
            <person name="Kyrpides N.C."/>
            <person name="Overbeek R."/>
        </authorList>
    </citation>
    <scope>NUCLEOTIDE SEQUENCE [LARGE SCALE GENOMIC DNA]</scope>
    <source>
        <strain>ATCC 25586 / DSM 15643 / BCRC 10681 / CIP 101130 / JCM 8532 / KCTC 2640 / LMG 13131 / VPI 4355</strain>
    </source>
</reference>
<proteinExistence type="inferred from homology"/>
<dbReference type="EC" id="3.1.26.3" evidence="1"/>
<dbReference type="EMBL" id="AE009951">
    <property type="protein sequence ID" value="AAL94358.1"/>
    <property type="molecule type" value="Genomic_DNA"/>
</dbReference>
<dbReference type="RefSeq" id="NP_603059.1">
    <property type="nucleotide sequence ID" value="NC_003454.1"/>
</dbReference>
<dbReference type="SMR" id="Q8RGX3"/>
<dbReference type="FunCoup" id="Q8RGX3">
    <property type="interactions" value="304"/>
</dbReference>
<dbReference type="STRING" id="190304.FN0152"/>
<dbReference type="PaxDb" id="190304-FN0152"/>
<dbReference type="EnsemblBacteria" id="AAL94358">
    <property type="protein sequence ID" value="AAL94358"/>
    <property type="gene ID" value="FN0152"/>
</dbReference>
<dbReference type="KEGG" id="fnu:FN0152"/>
<dbReference type="PATRIC" id="fig|190304.8.peg.732"/>
<dbReference type="eggNOG" id="COG0571">
    <property type="taxonomic scope" value="Bacteria"/>
</dbReference>
<dbReference type="HOGENOM" id="CLU_000907_1_3_0"/>
<dbReference type="InParanoid" id="Q8RGX3"/>
<dbReference type="BioCyc" id="FNUC190304:G1FZS-755-MONOMER"/>
<dbReference type="Proteomes" id="UP000002521">
    <property type="component" value="Chromosome"/>
</dbReference>
<dbReference type="GO" id="GO:0005829">
    <property type="term" value="C:cytosol"/>
    <property type="evidence" value="ECO:0000318"/>
    <property type="project" value="GO_Central"/>
</dbReference>
<dbReference type="GO" id="GO:0003725">
    <property type="term" value="F:double-stranded RNA binding"/>
    <property type="evidence" value="ECO:0000318"/>
    <property type="project" value="GO_Central"/>
</dbReference>
<dbReference type="GO" id="GO:0046872">
    <property type="term" value="F:metal ion binding"/>
    <property type="evidence" value="ECO:0007669"/>
    <property type="project" value="UniProtKB-KW"/>
</dbReference>
<dbReference type="GO" id="GO:0004525">
    <property type="term" value="F:ribonuclease III activity"/>
    <property type="evidence" value="ECO:0000318"/>
    <property type="project" value="GO_Central"/>
</dbReference>
<dbReference type="GO" id="GO:0019843">
    <property type="term" value="F:rRNA binding"/>
    <property type="evidence" value="ECO:0007669"/>
    <property type="project" value="UniProtKB-KW"/>
</dbReference>
<dbReference type="GO" id="GO:0006397">
    <property type="term" value="P:mRNA processing"/>
    <property type="evidence" value="ECO:0007669"/>
    <property type="project" value="UniProtKB-UniRule"/>
</dbReference>
<dbReference type="GO" id="GO:0010468">
    <property type="term" value="P:regulation of gene expression"/>
    <property type="evidence" value="ECO:0000318"/>
    <property type="project" value="GO_Central"/>
</dbReference>
<dbReference type="GO" id="GO:0006396">
    <property type="term" value="P:RNA processing"/>
    <property type="evidence" value="ECO:0000318"/>
    <property type="project" value="GO_Central"/>
</dbReference>
<dbReference type="GO" id="GO:0006364">
    <property type="term" value="P:rRNA processing"/>
    <property type="evidence" value="ECO:0007669"/>
    <property type="project" value="UniProtKB-UniRule"/>
</dbReference>
<dbReference type="GO" id="GO:0008033">
    <property type="term" value="P:tRNA processing"/>
    <property type="evidence" value="ECO:0007669"/>
    <property type="project" value="UniProtKB-KW"/>
</dbReference>
<dbReference type="CDD" id="cd10845">
    <property type="entry name" value="DSRM_RNAse_III_family"/>
    <property type="match status" value="1"/>
</dbReference>
<dbReference type="CDD" id="cd00593">
    <property type="entry name" value="RIBOc"/>
    <property type="match status" value="1"/>
</dbReference>
<dbReference type="FunFam" id="1.10.1520.10:FF:000001">
    <property type="entry name" value="Ribonuclease 3"/>
    <property type="match status" value="1"/>
</dbReference>
<dbReference type="Gene3D" id="3.30.160.20">
    <property type="match status" value="1"/>
</dbReference>
<dbReference type="Gene3D" id="1.10.1520.10">
    <property type="entry name" value="Ribonuclease III domain"/>
    <property type="match status" value="1"/>
</dbReference>
<dbReference type="HAMAP" id="MF_00104">
    <property type="entry name" value="RNase_III"/>
    <property type="match status" value="1"/>
</dbReference>
<dbReference type="InterPro" id="IPR014720">
    <property type="entry name" value="dsRBD_dom"/>
</dbReference>
<dbReference type="InterPro" id="IPR011907">
    <property type="entry name" value="RNase_III"/>
</dbReference>
<dbReference type="InterPro" id="IPR000999">
    <property type="entry name" value="RNase_III_dom"/>
</dbReference>
<dbReference type="InterPro" id="IPR036389">
    <property type="entry name" value="RNase_III_sf"/>
</dbReference>
<dbReference type="NCBIfam" id="TIGR02191">
    <property type="entry name" value="RNaseIII"/>
    <property type="match status" value="1"/>
</dbReference>
<dbReference type="PANTHER" id="PTHR11207:SF0">
    <property type="entry name" value="RIBONUCLEASE 3"/>
    <property type="match status" value="1"/>
</dbReference>
<dbReference type="PANTHER" id="PTHR11207">
    <property type="entry name" value="RIBONUCLEASE III"/>
    <property type="match status" value="1"/>
</dbReference>
<dbReference type="Pfam" id="PF00035">
    <property type="entry name" value="dsrm"/>
    <property type="match status" value="1"/>
</dbReference>
<dbReference type="Pfam" id="PF14622">
    <property type="entry name" value="Ribonucleas_3_3"/>
    <property type="match status" value="1"/>
</dbReference>
<dbReference type="SMART" id="SM00358">
    <property type="entry name" value="DSRM"/>
    <property type="match status" value="1"/>
</dbReference>
<dbReference type="SMART" id="SM00535">
    <property type="entry name" value="RIBOc"/>
    <property type="match status" value="1"/>
</dbReference>
<dbReference type="SUPFAM" id="SSF54768">
    <property type="entry name" value="dsRNA-binding domain-like"/>
    <property type="match status" value="1"/>
</dbReference>
<dbReference type="SUPFAM" id="SSF69065">
    <property type="entry name" value="RNase III domain-like"/>
    <property type="match status" value="1"/>
</dbReference>
<dbReference type="PROSITE" id="PS50137">
    <property type="entry name" value="DS_RBD"/>
    <property type="match status" value="1"/>
</dbReference>
<dbReference type="PROSITE" id="PS50142">
    <property type="entry name" value="RNASE_3_2"/>
    <property type="match status" value="1"/>
</dbReference>
<feature type="chain" id="PRO_0000180398" description="Ribonuclease 3">
    <location>
        <begin position="1"/>
        <end position="234"/>
    </location>
</feature>
<feature type="domain" description="RNase III" evidence="1">
    <location>
        <begin position="4"/>
        <end position="133"/>
    </location>
</feature>
<feature type="domain" description="DRBM" evidence="1">
    <location>
        <begin position="160"/>
        <end position="228"/>
    </location>
</feature>
<feature type="active site" evidence="1">
    <location>
        <position position="50"/>
    </location>
</feature>
<feature type="active site" evidence="1">
    <location>
        <position position="122"/>
    </location>
</feature>
<feature type="binding site" evidence="1">
    <location>
        <position position="46"/>
    </location>
    <ligand>
        <name>Mg(2+)</name>
        <dbReference type="ChEBI" id="CHEBI:18420"/>
    </ligand>
</feature>
<feature type="binding site" evidence="1">
    <location>
        <position position="119"/>
    </location>
    <ligand>
        <name>Mg(2+)</name>
        <dbReference type="ChEBI" id="CHEBI:18420"/>
    </ligand>
</feature>
<feature type="binding site" evidence="1">
    <location>
        <position position="122"/>
    </location>
    <ligand>
        <name>Mg(2+)</name>
        <dbReference type="ChEBI" id="CHEBI:18420"/>
    </ligand>
</feature>